<name>KAD_COXB1</name>
<accession>B6J8H9</accession>
<proteinExistence type="inferred from homology"/>
<feature type="chain" id="PRO_1000100553" description="Adenylate kinase">
    <location>
        <begin position="1"/>
        <end position="231"/>
    </location>
</feature>
<feature type="region of interest" description="NMP" evidence="1">
    <location>
        <begin position="32"/>
        <end position="61"/>
    </location>
</feature>
<feature type="region of interest" description="LID" evidence="1">
    <location>
        <begin position="124"/>
        <end position="161"/>
    </location>
</feature>
<feature type="binding site" evidence="1">
    <location>
        <begin position="12"/>
        <end position="17"/>
    </location>
    <ligand>
        <name>ATP</name>
        <dbReference type="ChEBI" id="CHEBI:30616"/>
    </ligand>
</feature>
<feature type="binding site" evidence="1">
    <location>
        <position position="33"/>
    </location>
    <ligand>
        <name>AMP</name>
        <dbReference type="ChEBI" id="CHEBI:456215"/>
    </ligand>
</feature>
<feature type="binding site" evidence="1">
    <location>
        <position position="38"/>
    </location>
    <ligand>
        <name>AMP</name>
        <dbReference type="ChEBI" id="CHEBI:456215"/>
    </ligand>
</feature>
<feature type="binding site" evidence="1">
    <location>
        <begin position="59"/>
        <end position="61"/>
    </location>
    <ligand>
        <name>AMP</name>
        <dbReference type="ChEBI" id="CHEBI:456215"/>
    </ligand>
</feature>
<feature type="binding site" evidence="1">
    <location>
        <begin position="87"/>
        <end position="90"/>
    </location>
    <ligand>
        <name>AMP</name>
        <dbReference type="ChEBI" id="CHEBI:456215"/>
    </ligand>
</feature>
<feature type="binding site" evidence="1">
    <location>
        <position position="94"/>
    </location>
    <ligand>
        <name>AMP</name>
        <dbReference type="ChEBI" id="CHEBI:456215"/>
    </ligand>
</feature>
<feature type="binding site" evidence="1">
    <location>
        <position position="125"/>
    </location>
    <ligand>
        <name>ATP</name>
        <dbReference type="ChEBI" id="CHEBI:30616"/>
    </ligand>
</feature>
<feature type="binding site" evidence="1">
    <location>
        <begin position="134"/>
        <end position="135"/>
    </location>
    <ligand>
        <name>ATP</name>
        <dbReference type="ChEBI" id="CHEBI:30616"/>
    </ligand>
</feature>
<feature type="binding site" evidence="1">
    <location>
        <position position="158"/>
    </location>
    <ligand>
        <name>AMP</name>
        <dbReference type="ChEBI" id="CHEBI:456215"/>
    </ligand>
</feature>
<feature type="binding site" evidence="1">
    <location>
        <position position="169"/>
    </location>
    <ligand>
        <name>AMP</name>
        <dbReference type="ChEBI" id="CHEBI:456215"/>
    </ligand>
</feature>
<feature type="binding site" evidence="1">
    <location>
        <position position="205"/>
    </location>
    <ligand>
        <name>ATP</name>
        <dbReference type="ChEBI" id="CHEBI:30616"/>
    </ligand>
</feature>
<comment type="function">
    <text evidence="1">Catalyzes the reversible transfer of the terminal phosphate group between ATP and AMP. Plays an important role in cellular energy homeostasis and in adenine nucleotide metabolism.</text>
</comment>
<comment type="catalytic activity">
    <reaction evidence="1">
        <text>AMP + ATP = 2 ADP</text>
        <dbReference type="Rhea" id="RHEA:12973"/>
        <dbReference type="ChEBI" id="CHEBI:30616"/>
        <dbReference type="ChEBI" id="CHEBI:456215"/>
        <dbReference type="ChEBI" id="CHEBI:456216"/>
        <dbReference type="EC" id="2.7.4.3"/>
    </reaction>
</comment>
<comment type="pathway">
    <text evidence="1">Purine metabolism; AMP biosynthesis via salvage pathway; AMP from ADP: step 1/1.</text>
</comment>
<comment type="subunit">
    <text evidence="1">Monomer.</text>
</comment>
<comment type="subcellular location">
    <subcellularLocation>
        <location evidence="1">Cytoplasm</location>
    </subcellularLocation>
</comment>
<comment type="domain">
    <text evidence="1">Consists of three domains, a large central CORE domain and two small peripheral domains, NMPbind and LID, which undergo movements during catalysis. The LID domain closes over the site of phosphoryl transfer upon ATP binding. Assembling and dissambling the active center during each catalytic cycle provides an effective means to prevent ATP hydrolysis.</text>
</comment>
<comment type="similarity">
    <text evidence="1">Belongs to the adenylate kinase family.</text>
</comment>
<reference key="1">
    <citation type="journal article" date="2009" name="Infect. Immun.">
        <title>Comparative genomics reveal extensive transposon-mediated genomic plasticity and diversity among potential effector proteins within the genus Coxiella.</title>
        <authorList>
            <person name="Beare P.A."/>
            <person name="Unsworth N."/>
            <person name="Andoh M."/>
            <person name="Voth D.E."/>
            <person name="Omsland A."/>
            <person name="Gilk S.D."/>
            <person name="Williams K.P."/>
            <person name="Sobral B.W."/>
            <person name="Kupko J.J. III"/>
            <person name="Porcella S.F."/>
            <person name="Samuel J.E."/>
            <person name="Heinzen R.A."/>
        </authorList>
    </citation>
    <scope>NUCLEOTIDE SEQUENCE [LARGE SCALE GENOMIC DNA]</scope>
    <source>
        <strain>CbuK_Q154</strain>
    </source>
</reference>
<evidence type="ECO:0000255" key="1">
    <source>
        <dbReference type="HAMAP-Rule" id="MF_00235"/>
    </source>
</evidence>
<gene>
    <name evidence="1" type="primary">adk</name>
    <name type="ordered locus">CbuK_1404</name>
</gene>
<organism>
    <name type="scientific">Coxiella burnetii (strain CbuK_Q154)</name>
    <name type="common">Coxiella burnetii (strain Q154)</name>
    <dbReference type="NCBI Taxonomy" id="434924"/>
    <lineage>
        <taxon>Bacteria</taxon>
        <taxon>Pseudomonadati</taxon>
        <taxon>Pseudomonadota</taxon>
        <taxon>Gammaproteobacteria</taxon>
        <taxon>Legionellales</taxon>
        <taxon>Coxiellaceae</taxon>
        <taxon>Coxiella</taxon>
    </lineage>
</organism>
<dbReference type="EC" id="2.7.4.3" evidence="1"/>
<dbReference type="EMBL" id="CP001020">
    <property type="protein sequence ID" value="ACJ20578.1"/>
    <property type="molecule type" value="Genomic_DNA"/>
</dbReference>
<dbReference type="RefSeq" id="WP_005771364.1">
    <property type="nucleotide sequence ID" value="NC_011528.1"/>
</dbReference>
<dbReference type="SMR" id="B6J8H9"/>
<dbReference type="KEGG" id="cbc:CbuK_1404"/>
<dbReference type="HOGENOM" id="CLU_032354_1_2_6"/>
<dbReference type="UniPathway" id="UPA00588">
    <property type="reaction ID" value="UER00649"/>
</dbReference>
<dbReference type="GO" id="GO:0005737">
    <property type="term" value="C:cytoplasm"/>
    <property type="evidence" value="ECO:0007669"/>
    <property type="project" value="UniProtKB-SubCell"/>
</dbReference>
<dbReference type="GO" id="GO:0004017">
    <property type="term" value="F:adenylate kinase activity"/>
    <property type="evidence" value="ECO:0007669"/>
    <property type="project" value="UniProtKB-UniRule"/>
</dbReference>
<dbReference type="GO" id="GO:0005524">
    <property type="term" value="F:ATP binding"/>
    <property type="evidence" value="ECO:0007669"/>
    <property type="project" value="UniProtKB-UniRule"/>
</dbReference>
<dbReference type="GO" id="GO:0044209">
    <property type="term" value="P:AMP salvage"/>
    <property type="evidence" value="ECO:0007669"/>
    <property type="project" value="UniProtKB-UniRule"/>
</dbReference>
<dbReference type="CDD" id="cd01428">
    <property type="entry name" value="ADK"/>
    <property type="match status" value="1"/>
</dbReference>
<dbReference type="FunFam" id="3.40.50.300:FF:000106">
    <property type="entry name" value="Adenylate kinase mitochondrial"/>
    <property type="match status" value="1"/>
</dbReference>
<dbReference type="Gene3D" id="3.40.50.300">
    <property type="entry name" value="P-loop containing nucleotide triphosphate hydrolases"/>
    <property type="match status" value="1"/>
</dbReference>
<dbReference type="HAMAP" id="MF_00235">
    <property type="entry name" value="Adenylate_kinase_Adk"/>
    <property type="match status" value="1"/>
</dbReference>
<dbReference type="InterPro" id="IPR006259">
    <property type="entry name" value="Adenyl_kin_sub"/>
</dbReference>
<dbReference type="InterPro" id="IPR000850">
    <property type="entry name" value="Adenylat/UMP-CMP_kin"/>
</dbReference>
<dbReference type="InterPro" id="IPR033690">
    <property type="entry name" value="Adenylat_kinase_CS"/>
</dbReference>
<dbReference type="InterPro" id="IPR007862">
    <property type="entry name" value="Adenylate_kinase_lid-dom"/>
</dbReference>
<dbReference type="InterPro" id="IPR027417">
    <property type="entry name" value="P-loop_NTPase"/>
</dbReference>
<dbReference type="NCBIfam" id="TIGR01351">
    <property type="entry name" value="adk"/>
    <property type="match status" value="1"/>
</dbReference>
<dbReference type="NCBIfam" id="NF001379">
    <property type="entry name" value="PRK00279.1-1"/>
    <property type="match status" value="1"/>
</dbReference>
<dbReference type="NCBIfam" id="NF001380">
    <property type="entry name" value="PRK00279.1-2"/>
    <property type="match status" value="1"/>
</dbReference>
<dbReference type="NCBIfam" id="NF001381">
    <property type="entry name" value="PRK00279.1-3"/>
    <property type="match status" value="1"/>
</dbReference>
<dbReference type="NCBIfam" id="NF011100">
    <property type="entry name" value="PRK14527.1"/>
    <property type="match status" value="1"/>
</dbReference>
<dbReference type="PANTHER" id="PTHR23359">
    <property type="entry name" value="NUCLEOTIDE KINASE"/>
    <property type="match status" value="1"/>
</dbReference>
<dbReference type="Pfam" id="PF00406">
    <property type="entry name" value="ADK"/>
    <property type="match status" value="1"/>
</dbReference>
<dbReference type="Pfam" id="PF05191">
    <property type="entry name" value="ADK_lid"/>
    <property type="match status" value="1"/>
</dbReference>
<dbReference type="PRINTS" id="PR00094">
    <property type="entry name" value="ADENYLTKNASE"/>
</dbReference>
<dbReference type="SUPFAM" id="SSF52540">
    <property type="entry name" value="P-loop containing nucleoside triphosphate hydrolases"/>
    <property type="match status" value="1"/>
</dbReference>
<dbReference type="PROSITE" id="PS00113">
    <property type="entry name" value="ADENYLATE_KINASE"/>
    <property type="match status" value="1"/>
</dbReference>
<sequence>MPLRIILLGLPGAGKGTQADFIAKHLDIPKISTGDMLRAAVKAKTPLGLEVKKIMESGGLVSDEIMIALVKERVKLPDCHKGYLLDGFPRTLAQADALNAAAIKIDLVIEIDVPEEEIIERMTGRLIHPASGRTYHRRYNPPKVADKDDVTGEPLIQRADDREETVRHRLAVYRKQTSPLSDYYAQWEKSGDPQAPKYFRISGLGSMEEVRERILQVFEAYDPRDSGNLEH</sequence>
<keyword id="KW-0067">ATP-binding</keyword>
<keyword id="KW-0963">Cytoplasm</keyword>
<keyword id="KW-0418">Kinase</keyword>
<keyword id="KW-0545">Nucleotide biosynthesis</keyword>
<keyword id="KW-0547">Nucleotide-binding</keyword>
<keyword id="KW-0808">Transferase</keyword>
<protein>
    <recommendedName>
        <fullName evidence="1">Adenylate kinase</fullName>
        <shortName evidence="1">AK</shortName>
        <ecNumber evidence="1">2.7.4.3</ecNumber>
    </recommendedName>
    <alternativeName>
        <fullName evidence="1">ATP-AMP transphosphorylase</fullName>
    </alternativeName>
    <alternativeName>
        <fullName evidence="1">ATP:AMP phosphotransferase</fullName>
    </alternativeName>
    <alternativeName>
        <fullName evidence="1">Adenylate monophosphate kinase</fullName>
    </alternativeName>
</protein>